<keyword id="KW-0002">3D-structure</keyword>
<keyword id="KW-0007">Acetylation</keyword>
<keyword id="KW-0963">Cytoplasm</keyword>
<keyword id="KW-0903">Direct protein sequencing</keyword>
<keyword id="KW-0430">Lectin</keyword>
<keyword id="KW-1267">Proteomics identification</keyword>
<keyword id="KW-1185">Reference proteome</keyword>
<sequence>MSLLPVPYTEAASLSTGSTVTIKGRPLACFLNEPYLQVDFHTEMKEESDIVFHFQVCFGRRVVMNSREYGAWKQQVESKNMPFQDGQEFELSISVLPDKYQVMVNGQSSYTFDHRIKPEAVKMVQVWRDISLTKFNVSYLKR</sequence>
<feature type="initiator methionine" description="Removed" evidence="6">
    <location>
        <position position="1"/>
    </location>
</feature>
<feature type="chain" id="PRO_0000076960" description="Galectin-10">
    <location>
        <begin position="2"/>
        <end position="142"/>
    </location>
</feature>
<feature type="domain" description="Galectin" evidence="1">
    <location>
        <begin position="6"/>
        <end position="138"/>
    </location>
</feature>
<feature type="site" description="Not glycosylated" evidence="6">
    <location>
        <position position="136"/>
    </location>
</feature>
<feature type="modified residue" description="N-acetylserine" evidence="6">
    <location>
        <position position="2"/>
    </location>
</feature>
<feature type="sequence variant" id="VAR_014765" description="In dbSNP:rs17608." evidence="3 4 5 8 11 12">
    <original>A</original>
    <variation>V</variation>
    <location>
        <position position="28"/>
    </location>
</feature>
<feature type="strand" evidence="14">
    <location>
        <begin position="6"/>
        <end position="11"/>
    </location>
</feature>
<feature type="strand" evidence="14">
    <location>
        <begin position="18"/>
        <end position="28"/>
    </location>
</feature>
<feature type="helix" evidence="14">
    <location>
        <begin position="30"/>
        <end position="32"/>
    </location>
</feature>
<feature type="strand" evidence="14">
    <location>
        <begin position="35"/>
        <end position="45"/>
    </location>
</feature>
<feature type="strand" evidence="14">
    <location>
        <begin position="50"/>
        <end position="57"/>
    </location>
</feature>
<feature type="turn" evidence="14">
    <location>
        <begin position="58"/>
        <end position="60"/>
    </location>
</feature>
<feature type="strand" evidence="14">
    <location>
        <begin position="61"/>
        <end position="68"/>
    </location>
</feature>
<feature type="strand" evidence="14">
    <location>
        <begin position="76"/>
        <end position="78"/>
    </location>
</feature>
<feature type="strand" evidence="14">
    <location>
        <begin position="89"/>
        <end position="95"/>
    </location>
</feature>
<feature type="strand" evidence="14">
    <location>
        <begin position="97"/>
        <end position="104"/>
    </location>
</feature>
<feature type="strand" evidence="14">
    <location>
        <begin position="107"/>
        <end position="113"/>
    </location>
</feature>
<feature type="helix" evidence="14">
    <location>
        <begin position="118"/>
        <end position="120"/>
    </location>
</feature>
<feature type="strand" evidence="14">
    <location>
        <begin position="123"/>
        <end position="139"/>
    </location>
</feature>
<organism>
    <name type="scientific">Homo sapiens</name>
    <name type="common">Human</name>
    <dbReference type="NCBI Taxonomy" id="9606"/>
    <lineage>
        <taxon>Eukaryota</taxon>
        <taxon>Metazoa</taxon>
        <taxon>Chordata</taxon>
        <taxon>Craniata</taxon>
        <taxon>Vertebrata</taxon>
        <taxon>Euteleostomi</taxon>
        <taxon>Mammalia</taxon>
        <taxon>Eutheria</taxon>
        <taxon>Euarchontoglires</taxon>
        <taxon>Primates</taxon>
        <taxon>Haplorrhini</taxon>
        <taxon>Catarrhini</taxon>
        <taxon>Hominidae</taxon>
        <taxon>Homo</taxon>
    </lineage>
</organism>
<reference key="1">
    <citation type="journal article" date="1993" name="J. Immunol.">
        <title>Molecular cloning and characterization of human eosinophil Charcot-Leyden crystal protein (lysophospholipase). Similarities to IgE binding proteins and the S-type animal lectin superfamily.</title>
        <authorList>
            <person name="Ackerman S.J."/>
            <person name="Corrette S.E."/>
            <person name="Rosenberg H.F."/>
            <person name="Bennett J.C."/>
            <person name="Mastrianni D.M."/>
            <person name="Nicholson-Weller A."/>
            <person name="Weller P.F."/>
            <person name="Chin D.T."/>
            <person name="Tenen D.G."/>
        </authorList>
    </citation>
    <scope>NUCLEOTIDE SEQUENCE [MRNA]</scope>
    <scope>PROTEIN SEQUENCE OF 3-18 AND 93-110</scope>
    <scope>VARIANT VAL-28</scope>
</reference>
<reference key="2">
    <citation type="journal article" date="1992" name="Genomics">
        <title>Localization of the human eosinophil Charcot-Leyden crystal protein (lysophospholipase) gene (CLC) to chromosome 19 and the human ribonuclease 2 (eosinophil-derived neurotoxin) and ribonuclease 3 (eosinophil cationic protein) genes (RNS2 and RNS3) to chromosome 14.</title>
        <authorList>
            <person name="Mastrianni D.M."/>
            <person name="Eddy R.L."/>
            <person name="Rosenberg H.F."/>
            <person name="Corrette S.E."/>
            <person name="Shows T.B."/>
            <person name="Tenen D.G."/>
            <person name="Ackerman S.J."/>
        </authorList>
    </citation>
    <scope>NUCLEOTIDE SEQUENCE [GENOMIC DNA]</scope>
    <scope>VARIANT VAL-28</scope>
</reference>
<reference key="3">
    <citation type="journal article" date="1997" name="Genomics">
        <title>The genomic structure of the human Charcot-Leyden crystal protein gene is analogous to those of the galectin genes.</title>
        <authorList>
            <person name="Dyer K.D."/>
            <person name="Handen J.S."/>
            <person name="Rosenberg H.F."/>
        </authorList>
    </citation>
    <scope>NUCLEOTIDE SEQUENCE [GENOMIC DNA]</scope>
    <scope>VARIANT VAL-28</scope>
</reference>
<reference key="4">
    <citation type="journal article" date="2009" name="Proc. Natl. Acad. Sci. U.S.A.">
        <title>A primate subfamily of galectins expressed at the maternal-fetal interface that promote immune cell death.</title>
        <authorList>
            <person name="Than N.G."/>
            <person name="Romero R."/>
            <person name="Goodman M."/>
            <person name="Weckle A."/>
            <person name="Xing J."/>
            <person name="Dong Z."/>
            <person name="Xu Y."/>
            <person name="Tarquini F."/>
            <person name="Szilagyi A."/>
            <person name="Gal P."/>
            <person name="Hou Z."/>
            <person name="Tarca A.L."/>
            <person name="Kim C.J."/>
            <person name="Kim J.S."/>
            <person name="Haidarian S."/>
            <person name="Uddin M."/>
            <person name="Bohn H."/>
            <person name="Benirschke K."/>
            <person name="Santolaya-Forgas J."/>
            <person name="Grossman L.I."/>
            <person name="Erez O."/>
            <person name="Hassan S.S."/>
            <person name="Zavodszky P."/>
            <person name="Papp Z."/>
            <person name="Wildman D.E."/>
        </authorList>
    </citation>
    <scope>NUCLEOTIDE SEQUENCE [MRNA]</scope>
    <scope>TISSUE SPECIFICITY</scope>
    <scope>VARIANT VAL-28</scope>
    <source>
        <tissue>Placenta</tissue>
    </source>
</reference>
<reference key="5">
    <citation type="journal article" date="2004" name="Nature">
        <title>The DNA sequence and biology of human chromosome 19.</title>
        <authorList>
            <person name="Grimwood J."/>
            <person name="Gordon L.A."/>
            <person name="Olsen A.S."/>
            <person name="Terry A."/>
            <person name="Schmutz J."/>
            <person name="Lamerdin J.E."/>
            <person name="Hellsten U."/>
            <person name="Goodstein D."/>
            <person name="Couronne O."/>
            <person name="Tran-Gyamfi M."/>
            <person name="Aerts A."/>
            <person name="Altherr M."/>
            <person name="Ashworth L."/>
            <person name="Bajorek E."/>
            <person name="Black S."/>
            <person name="Branscomb E."/>
            <person name="Caenepeel S."/>
            <person name="Carrano A.V."/>
            <person name="Caoile C."/>
            <person name="Chan Y.M."/>
            <person name="Christensen M."/>
            <person name="Cleland C.A."/>
            <person name="Copeland A."/>
            <person name="Dalin E."/>
            <person name="Dehal P."/>
            <person name="Denys M."/>
            <person name="Detter J.C."/>
            <person name="Escobar J."/>
            <person name="Flowers D."/>
            <person name="Fotopulos D."/>
            <person name="Garcia C."/>
            <person name="Georgescu A.M."/>
            <person name="Glavina T."/>
            <person name="Gomez M."/>
            <person name="Gonzales E."/>
            <person name="Groza M."/>
            <person name="Hammon N."/>
            <person name="Hawkins T."/>
            <person name="Haydu L."/>
            <person name="Ho I."/>
            <person name="Huang W."/>
            <person name="Israni S."/>
            <person name="Jett J."/>
            <person name="Kadner K."/>
            <person name="Kimball H."/>
            <person name="Kobayashi A."/>
            <person name="Larionov V."/>
            <person name="Leem S.-H."/>
            <person name="Lopez F."/>
            <person name="Lou Y."/>
            <person name="Lowry S."/>
            <person name="Malfatti S."/>
            <person name="Martinez D."/>
            <person name="McCready P.M."/>
            <person name="Medina C."/>
            <person name="Morgan J."/>
            <person name="Nelson K."/>
            <person name="Nolan M."/>
            <person name="Ovcharenko I."/>
            <person name="Pitluck S."/>
            <person name="Pollard M."/>
            <person name="Popkie A.P."/>
            <person name="Predki P."/>
            <person name="Quan G."/>
            <person name="Ramirez L."/>
            <person name="Rash S."/>
            <person name="Retterer J."/>
            <person name="Rodriguez A."/>
            <person name="Rogers S."/>
            <person name="Salamov A."/>
            <person name="Salazar A."/>
            <person name="She X."/>
            <person name="Smith D."/>
            <person name="Slezak T."/>
            <person name="Solovyev V."/>
            <person name="Thayer N."/>
            <person name="Tice H."/>
            <person name="Tsai M."/>
            <person name="Ustaszewska A."/>
            <person name="Vo N."/>
            <person name="Wagner M."/>
            <person name="Wheeler J."/>
            <person name="Wu K."/>
            <person name="Xie G."/>
            <person name="Yang J."/>
            <person name="Dubchak I."/>
            <person name="Furey T.S."/>
            <person name="DeJong P."/>
            <person name="Dickson M."/>
            <person name="Gordon D."/>
            <person name="Eichler E.E."/>
            <person name="Pennacchio L.A."/>
            <person name="Richardson P."/>
            <person name="Stubbs L."/>
            <person name="Rokhsar D.S."/>
            <person name="Myers R.M."/>
            <person name="Rubin E.M."/>
            <person name="Lucas S.M."/>
        </authorList>
    </citation>
    <scope>NUCLEOTIDE SEQUENCE [LARGE SCALE GENOMIC DNA]</scope>
    <scope>VARIANT VAL-28</scope>
</reference>
<reference key="6">
    <citation type="submission" date="2005-07" db="EMBL/GenBank/DDBJ databases">
        <authorList>
            <person name="Mural R.J."/>
            <person name="Istrail S."/>
            <person name="Sutton G.G."/>
            <person name="Florea L."/>
            <person name="Halpern A.L."/>
            <person name="Mobarry C.M."/>
            <person name="Lippert R."/>
            <person name="Walenz B."/>
            <person name="Shatkay H."/>
            <person name="Dew I."/>
            <person name="Miller J.R."/>
            <person name="Flanigan M.J."/>
            <person name="Edwards N.J."/>
            <person name="Bolanos R."/>
            <person name="Fasulo D."/>
            <person name="Halldorsson B.V."/>
            <person name="Hannenhalli S."/>
            <person name="Turner R."/>
            <person name="Yooseph S."/>
            <person name="Lu F."/>
            <person name="Nusskern D.R."/>
            <person name="Shue B.C."/>
            <person name="Zheng X.H."/>
            <person name="Zhong F."/>
            <person name="Delcher A.L."/>
            <person name="Huson D.H."/>
            <person name="Kravitz S.A."/>
            <person name="Mouchard L."/>
            <person name="Reinert K."/>
            <person name="Remington K.A."/>
            <person name="Clark A.G."/>
            <person name="Waterman M.S."/>
            <person name="Eichler E.E."/>
            <person name="Adams M.D."/>
            <person name="Hunkapiller M.W."/>
            <person name="Myers E.W."/>
            <person name="Venter J.C."/>
        </authorList>
    </citation>
    <scope>NUCLEOTIDE SEQUENCE [LARGE SCALE GENOMIC DNA]</scope>
</reference>
<reference key="7">
    <citation type="journal article" date="2004" name="Genome Res.">
        <title>The status, quality, and expansion of the NIH full-length cDNA project: the Mammalian Gene Collection (MGC).</title>
        <authorList>
            <consortium name="The MGC Project Team"/>
        </authorList>
    </citation>
    <scope>NUCLEOTIDE SEQUENCE [LARGE SCALE MRNA]</scope>
    <scope>VARIANT VAL-28</scope>
</reference>
<reference key="8">
    <citation type="journal article" date="2006" name="J. Proteome Res.">
        <title>Comparative proteomics of nasal fluid in seasonal allergic rhinitis.</title>
        <authorList>
            <person name="Ghafouri B."/>
            <person name="Irander K."/>
            <person name="Lindbom J."/>
            <person name="Tagesson C."/>
            <person name="Lindahl M."/>
        </authorList>
    </citation>
    <scope>PROTEIN SEQUENCE OF 2-23; 92-99 AND 135-141</scope>
    <scope>ACETYLATION AT SER-2</scope>
    <scope>LACK OF GLYCOSYLATION AT ASN-136</scope>
    <scope>IDENTIFICATION BY MASS SPECTROMETRY</scope>
</reference>
<reference key="9">
    <citation type="journal article" date="2007" name="Blood">
        <title>Human CD4+CD25+ regulatory T cells: proteome analysis identifies galectin-10 as a novel marker essential for their anergy and suppressive function.</title>
        <authorList>
            <person name="Kubach J."/>
            <person name="Lutter P."/>
            <person name="Bopp T."/>
            <person name="Stoll S."/>
            <person name="Becker C."/>
            <person name="Huter E."/>
            <person name="Richter C."/>
            <person name="Weingarten P."/>
            <person name="Warger T."/>
            <person name="Knop J."/>
            <person name="Muellner S."/>
            <person name="Wijdenes J."/>
            <person name="Schild H."/>
            <person name="Schmitt E."/>
            <person name="Jonuleit H."/>
        </authorList>
    </citation>
    <scope>FUNCTION</scope>
    <scope>SUBCELLULAR LOCATION</scope>
    <scope>TISSUE SPECIFICITY</scope>
</reference>
<reference key="10">
    <citation type="journal article" date="2009" name="Ann. N. Y. Acad. Sci.">
        <title>Galectin-10, eosinophils, and celiac disease.</title>
        <authorList>
            <person name="De Re V."/>
            <person name="Simula M.P."/>
            <person name="Cannizzaro R."/>
            <person name="Pavan A."/>
            <person name="De Zorzi M.A."/>
            <person name="Toffoli G."/>
            <person name="Canzonieri V."/>
        </authorList>
    </citation>
    <scope>TISSUE SPECIFICITY</scope>
</reference>
<reference key="11">
    <citation type="journal article" date="2012" name="PLoS ONE">
        <title>Galectin-10, a potential biomarker of eosinophilic airway inflammation.</title>
        <authorList>
            <person name="Chua J.C."/>
            <person name="Douglass J.A."/>
            <person name="Gillman A."/>
            <person name="O'Hehir R.E."/>
            <person name="Meeusen E.N."/>
        </authorList>
    </citation>
    <scope>TISSUE SPECIFICITY</scope>
</reference>
<reference key="12">
    <citation type="journal article" date="2014" name="J. Proteomics">
        <title>An enzyme assisted RP-RPLC approach for in-depth analysis of human liver phosphoproteome.</title>
        <authorList>
            <person name="Bian Y."/>
            <person name="Song C."/>
            <person name="Cheng K."/>
            <person name="Dong M."/>
            <person name="Wang F."/>
            <person name="Huang J."/>
            <person name="Sun D."/>
            <person name="Wang L."/>
            <person name="Ye M."/>
            <person name="Zou H."/>
        </authorList>
    </citation>
    <scope>IDENTIFICATION BY MASS SPECTROMETRY [LARGE SCALE ANALYSIS]</scope>
    <source>
        <tissue>Liver</tissue>
    </source>
</reference>
<reference key="13">
    <citation type="journal article" date="1995" name="Structure">
        <title>Crystal structure of human Charcot-Leyden crystal protein, an eosinophil lysophospholipase, identifies it as a new member of the carbohydrate-binding family of galectins.</title>
        <authorList>
            <person name="Leonidas D.D."/>
            <person name="Elbert B.L."/>
            <person name="Zhou Z."/>
            <person name="Leffler H."/>
            <person name="Ackerman S.J."/>
            <person name="Acharya K.R."/>
        </authorList>
    </citation>
    <scope>X-RAY CRYSTALLOGRAPHY (1.8 ANGSTROMS)</scope>
</reference>
<reference key="14">
    <citation type="journal article" date="1999" name="Biochemistry">
        <title>Selective recognition of mannose by the human eosinophil Charcot-Leyden crystal protein (galectin-10): a crystallographic study at 1.8 A resolution.</title>
        <authorList>
            <person name="Swaminathan G.J."/>
            <person name="Leonidas D.D."/>
            <person name="Savage M.P."/>
            <person name="Ackerman S.J."/>
            <person name="Acharya K.R."/>
        </authorList>
    </citation>
    <scope>X-RAY CRYSTALLOGRAPHY (1.8 ANGSTROMS)</scope>
</reference>
<reference key="15">
    <citation type="journal article" date="2002" name="J. Biol. Chem.">
        <title>Charcot-Leyden crystal protein (galectin-10) is not a dual function galectin with lysophospholipase activity but binds a lysophospholipase inhibitor in a novel structural fashion.</title>
        <authorList>
            <person name="Ackerman S.J."/>
            <person name="Liu L."/>
            <person name="Kwatia M.A."/>
            <person name="Savage M.P."/>
            <person name="Leonidas D.D."/>
            <person name="Swaminathan G.J."/>
            <person name="Acharya K.R."/>
        </authorList>
    </citation>
    <scope>X-RAY CRYSTALLOGRAPHY (1.8 ANGSTROMS) OF 2-139</scope>
    <scope>ABSENCE OF LYSOPHOSPHOLIPASE ACTIVITY</scope>
    <scope>INTERACTION WITH CEL</scope>
</reference>
<name>LEG10_HUMAN</name>
<accession>Q05315</accession>
<accession>C5HZ13</accession>
<accession>C5HZ14</accession>
<accession>Q0VDE3</accession>
<protein>
    <recommendedName>
        <fullName>Galectin-10</fullName>
        <shortName>Gal-10</shortName>
    </recommendedName>
    <alternativeName>
        <fullName>Charcot-Leyden crystal protein</fullName>
        <shortName>CLC</shortName>
    </alternativeName>
    <alternativeName>
        <fullName>Eosinophil lysophospholipase</fullName>
    </alternativeName>
    <alternativeName>
        <fullName>Lysolecithin acylhydrolase</fullName>
    </alternativeName>
</protein>
<proteinExistence type="evidence at protein level"/>
<gene>
    <name type="primary">CLC</name>
    <name type="synonym">LGALS10</name>
    <name type="synonym">LGALS10A</name>
</gene>
<dbReference type="EMBL" id="L01664">
    <property type="protein sequence ID" value="AAA36190.1"/>
    <property type="molecule type" value="mRNA"/>
</dbReference>
<dbReference type="EMBL" id="L01665">
    <property type="protein sequence ID" value="AAC37530.1"/>
    <property type="molecule type" value="Genomic_DNA"/>
</dbReference>
<dbReference type="EMBL" id="U68398">
    <property type="protein sequence ID" value="AAC51157.1"/>
    <property type="molecule type" value="Genomic_DNA"/>
</dbReference>
<dbReference type="EMBL" id="U68393">
    <property type="protein sequence ID" value="AAC51157.1"/>
    <property type="status" value="JOINED"/>
    <property type="molecule type" value="Genomic_DNA"/>
</dbReference>
<dbReference type="EMBL" id="U68395">
    <property type="protein sequence ID" value="AAC51157.1"/>
    <property type="status" value="JOINED"/>
    <property type="molecule type" value="Genomic_DNA"/>
</dbReference>
<dbReference type="EMBL" id="U68396">
    <property type="protein sequence ID" value="AAC51157.1"/>
    <property type="status" value="JOINED"/>
    <property type="molecule type" value="Genomic_DNA"/>
</dbReference>
<dbReference type="EMBL" id="FJ613334">
    <property type="protein sequence ID" value="ACR09636.1"/>
    <property type="molecule type" value="mRNA"/>
</dbReference>
<dbReference type="EMBL" id="FJ613335">
    <property type="protein sequence ID" value="ACR09637.1"/>
    <property type="molecule type" value="mRNA"/>
</dbReference>
<dbReference type="EMBL" id="AC005393">
    <property type="protein sequence ID" value="AAC28912.1"/>
    <property type="molecule type" value="Genomic_DNA"/>
</dbReference>
<dbReference type="EMBL" id="AC006133">
    <property type="status" value="NOT_ANNOTATED_CDS"/>
    <property type="molecule type" value="Genomic_DNA"/>
</dbReference>
<dbReference type="EMBL" id="CH471126">
    <property type="protein sequence ID" value="EAW56914.1"/>
    <property type="molecule type" value="Genomic_DNA"/>
</dbReference>
<dbReference type="EMBL" id="BC119711">
    <property type="protein sequence ID" value="AAI19712.1"/>
    <property type="molecule type" value="mRNA"/>
</dbReference>
<dbReference type="EMBL" id="BC119712">
    <property type="protein sequence ID" value="AAI19713.1"/>
    <property type="molecule type" value="mRNA"/>
</dbReference>
<dbReference type="CCDS" id="CCDS33025.1"/>
<dbReference type="PIR" id="A46523">
    <property type="entry name" value="A46523"/>
</dbReference>
<dbReference type="RefSeq" id="NP_001819.2">
    <property type="nucleotide sequence ID" value="NM_001828.5"/>
</dbReference>
<dbReference type="PDB" id="1G86">
    <property type="method" value="X-ray"/>
    <property type="resolution" value="1.80 A"/>
    <property type="chains" value="A=1-142"/>
</dbReference>
<dbReference type="PDB" id="1HDK">
    <property type="method" value="X-ray"/>
    <property type="resolution" value="1.80 A"/>
    <property type="chains" value="A=2-142"/>
</dbReference>
<dbReference type="PDB" id="1LCL">
    <property type="method" value="X-ray"/>
    <property type="resolution" value="1.80 A"/>
    <property type="chains" value="A=1-142"/>
</dbReference>
<dbReference type="PDB" id="1QKQ">
    <property type="method" value="X-ray"/>
    <property type="resolution" value="1.80 A"/>
    <property type="chains" value="A=1-142"/>
</dbReference>
<dbReference type="PDB" id="5XRG">
    <property type="method" value="X-ray"/>
    <property type="resolution" value="1.55 A"/>
    <property type="chains" value="A=1-142"/>
</dbReference>
<dbReference type="PDB" id="5XRH">
    <property type="method" value="X-ray"/>
    <property type="resolution" value="1.55 A"/>
    <property type="chains" value="A=1-142"/>
</dbReference>
<dbReference type="PDB" id="5XRI">
    <property type="method" value="X-ray"/>
    <property type="resolution" value="1.68 A"/>
    <property type="chains" value="A=1-142"/>
</dbReference>
<dbReference type="PDB" id="5XRJ">
    <property type="method" value="X-ray"/>
    <property type="resolution" value="1.90 A"/>
    <property type="chains" value="A=1-142"/>
</dbReference>
<dbReference type="PDB" id="5XRK">
    <property type="method" value="X-ray"/>
    <property type="resolution" value="1.70 A"/>
    <property type="chains" value="A=1-142"/>
</dbReference>
<dbReference type="PDB" id="5XRL">
    <property type="method" value="X-ray"/>
    <property type="resolution" value="2.00 A"/>
    <property type="chains" value="A=1-142"/>
</dbReference>
<dbReference type="PDB" id="5XRM">
    <property type="method" value="X-ray"/>
    <property type="resolution" value="2.00 A"/>
    <property type="chains" value="A=1-142"/>
</dbReference>
<dbReference type="PDB" id="5XRN">
    <property type="method" value="X-ray"/>
    <property type="resolution" value="1.60 A"/>
    <property type="chains" value="A=1-142"/>
</dbReference>
<dbReference type="PDB" id="5XRO">
    <property type="method" value="X-ray"/>
    <property type="resolution" value="1.60 A"/>
    <property type="chains" value="A=1-142"/>
</dbReference>
<dbReference type="PDB" id="5XRP">
    <property type="method" value="X-ray"/>
    <property type="resolution" value="2.00 A"/>
    <property type="chains" value="A=1-142"/>
</dbReference>
<dbReference type="PDB" id="5YT4">
    <property type="method" value="X-ray"/>
    <property type="resolution" value="2.00 A"/>
    <property type="chains" value="A=2-139"/>
</dbReference>
<dbReference type="PDB" id="6A1S">
    <property type="method" value="X-ray"/>
    <property type="resolution" value="1.63 A"/>
    <property type="chains" value="A=1-142"/>
</dbReference>
<dbReference type="PDB" id="6A1T">
    <property type="method" value="X-ray"/>
    <property type="resolution" value="1.97 A"/>
    <property type="chains" value="A=1-142"/>
</dbReference>
<dbReference type="PDB" id="6A1U">
    <property type="method" value="X-ray"/>
    <property type="resolution" value="1.62 A"/>
    <property type="chains" value="A=1-142"/>
</dbReference>
<dbReference type="PDB" id="6A1V">
    <property type="method" value="X-ray"/>
    <property type="resolution" value="1.98 A"/>
    <property type="chains" value="A=1-142"/>
</dbReference>
<dbReference type="PDB" id="6A1X">
    <property type="method" value="X-ray"/>
    <property type="resolution" value="1.99 A"/>
    <property type="chains" value="A=1-142"/>
</dbReference>
<dbReference type="PDB" id="6A1Y">
    <property type="method" value="X-ray"/>
    <property type="resolution" value="1.63 A"/>
    <property type="chains" value="A=1-142"/>
</dbReference>
<dbReference type="PDB" id="6GKQ">
    <property type="method" value="X-ray"/>
    <property type="resolution" value="2.30 A"/>
    <property type="chains" value="A=1-142"/>
</dbReference>
<dbReference type="PDB" id="6GKS">
    <property type="method" value="X-ray"/>
    <property type="resolution" value="1.38 A"/>
    <property type="chains" value="A=1-142"/>
</dbReference>
<dbReference type="PDB" id="6GKT">
    <property type="method" value="X-ray"/>
    <property type="resolution" value="2.10 A"/>
    <property type="chains" value="A/B/C/D/E/F=1-142"/>
</dbReference>
<dbReference type="PDB" id="6GKU">
    <property type="method" value="X-ray"/>
    <property type="resolution" value="1.91 A"/>
    <property type="chains" value="A=1-142"/>
</dbReference>
<dbReference type="PDB" id="6GLW">
    <property type="method" value="X-ray"/>
    <property type="resolution" value="1.90 A"/>
    <property type="chains" value="A/B=1-142"/>
</dbReference>
<dbReference type="PDB" id="6GLX">
    <property type="method" value="X-ray"/>
    <property type="resolution" value="3.40 A"/>
    <property type="chains" value="A/B=1-142"/>
</dbReference>
<dbReference type="PDB" id="6L64">
    <property type="method" value="X-ray"/>
    <property type="resolution" value="2.08 A"/>
    <property type="chains" value="A=1-142"/>
</dbReference>
<dbReference type="PDB" id="6L67">
    <property type="method" value="X-ray"/>
    <property type="resolution" value="1.97 A"/>
    <property type="chains" value="A=1-142"/>
</dbReference>
<dbReference type="PDB" id="6L68">
    <property type="method" value="X-ray"/>
    <property type="resolution" value="1.92 A"/>
    <property type="chains" value="A=1-142"/>
</dbReference>
<dbReference type="PDB" id="6L6A">
    <property type="method" value="X-ray"/>
    <property type="resolution" value="1.81 A"/>
    <property type="chains" value="A=1-142"/>
</dbReference>
<dbReference type="PDB" id="6L6B">
    <property type="method" value="X-ray"/>
    <property type="resolution" value="1.80 A"/>
    <property type="chains" value="A=1-142"/>
</dbReference>
<dbReference type="PDB" id="6L6C">
    <property type="method" value="X-ray"/>
    <property type="resolution" value="1.77 A"/>
    <property type="chains" value="A=1-142"/>
</dbReference>
<dbReference type="PDB" id="6L6D">
    <property type="method" value="X-ray"/>
    <property type="resolution" value="1.93 A"/>
    <property type="chains" value="A=1-142"/>
</dbReference>
<dbReference type="PDB" id="6QRN">
    <property type="method" value="X-ray"/>
    <property type="resolution" value="1.40 A"/>
    <property type="chains" value="A=1-142"/>
</dbReference>
<dbReference type="PDB" id="8JAE">
    <property type="method" value="X-ray"/>
    <property type="resolution" value="1.62 A"/>
    <property type="chains" value="A=1-142"/>
</dbReference>
<dbReference type="PDBsum" id="1G86"/>
<dbReference type="PDBsum" id="1HDK"/>
<dbReference type="PDBsum" id="1LCL"/>
<dbReference type="PDBsum" id="1QKQ"/>
<dbReference type="PDBsum" id="5XRG"/>
<dbReference type="PDBsum" id="5XRH"/>
<dbReference type="PDBsum" id="5XRI"/>
<dbReference type="PDBsum" id="5XRJ"/>
<dbReference type="PDBsum" id="5XRK"/>
<dbReference type="PDBsum" id="5XRL"/>
<dbReference type="PDBsum" id="5XRM"/>
<dbReference type="PDBsum" id="5XRN"/>
<dbReference type="PDBsum" id="5XRO"/>
<dbReference type="PDBsum" id="5XRP"/>
<dbReference type="PDBsum" id="5YT4"/>
<dbReference type="PDBsum" id="6A1S"/>
<dbReference type="PDBsum" id="6A1T"/>
<dbReference type="PDBsum" id="6A1U"/>
<dbReference type="PDBsum" id="6A1V"/>
<dbReference type="PDBsum" id="6A1X"/>
<dbReference type="PDBsum" id="6A1Y"/>
<dbReference type="PDBsum" id="6GKQ"/>
<dbReference type="PDBsum" id="6GKS"/>
<dbReference type="PDBsum" id="6GKT"/>
<dbReference type="PDBsum" id="6GKU"/>
<dbReference type="PDBsum" id="6GLW"/>
<dbReference type="PDBsum" id="6GLX"/>
<dbReference type="PDBsum" id="6L64"/>
<dbReference type="PDBsum" id="6L67"/>
<dbReference type="PDBsum" id="6L68"/>
<dbReference type="PDBsum" id="6L6A"/>
<dbReference type="PDBsum" id="6L6B"/>
<dbReference type="PDBsum" id="6L6C"/>
<dbReference type="PDBsum" id="6L6D"/>
<dbReference type="PDBsum" id="6QRN"/>
<dbReference type="PDBsum" id="8JAE"/>
<dbReference type="SASBDB" id="Q05315"/>
<dbReference type="SMR" id="Q05315"/>
<dbReference type="BioGRID" id="107592">
    <property type="interactions" value="2"/>
</dbReference>
<dbReference type="FunCoup" id="Q05315">
    <property type="interactions" value="6"/>
</dbReference>
<dbReference type="STRING" id="9606.ENSP00000221804"/>
<dbReference type="DrugBank" id="DB02967">
    <property type="generic name" value="N-Ethylmaleimide"/>
</dbReference>
<dbReference type="DrugBank" id="DB02983">
    <property type="generic name" value="Para-Mercury-Benzenesulfonic Acid"/>
</dbReference>
<dbReference type="UniLectin" id="Q05315"/>
<dbReference type="iPTMnet" id="Q05315"/>
<dbReference type="PhosphoSitePlus" id="Q05315"/>
<dbReference type="BioMuta" id="CLC"/>
<dbReference type="DMDM" id="317373429"/>
<dbReference type="MassIVE" id="Q05315"/>
<dbReference type="PaxDb" id="9606-ENSP00000221804"/>
<dbReference type="PeptideAtlas" id="Q05315"/>
<dbReference type="ProteomicsDB" id="58318"/>
<dbReference type="TopDownProteomics" id="Q05315"/>
<dbReference type="ABCD" id="Q05315">
    <property type="antibodies" value="3 sequenced antibodies"/>
</dbReference>
<dbReference type="Antibodypedia" id="30409">
    <property type="antibodies" value="288 antibodies from 30 providers"/>
</dbReference>
<dbReference type="DNASU" id="1178"/>
<dbReference type="Ensembl" id="ENST00000221804.5">
    <property type="protein sequence ID" value="ENSP00000221804.3"/>
    <property type="gene ID" value="ENSG00000105205.7"/>
</dbReference>
<dbReference type="GeneID" id="1178"/>
<dbReference type="KEGG" id="hsa:1178"/>
<dbReference type="MANE-Select" id="ENST00000221804.5">
    <property type="protein sequence ID" value="ENSP00000221804.3"/>
    <property type="RefSeq nucleotide sequence ID" value="NM_001828.6"/>
    <property type="RefSeq protein sequence ID" value="NP_001819.2"/>
</dbReference>
<dbReference type="UCSC" id="uc002omh.4">
    <property type="organism name" value="human"/>
</dbReference>
<dbReference type="AGR" id="HGNC:2014"/>
<dbReference type="CTD" id="1178"/>
<dbReference type="DisGeNET" id="1178"/>
<dbReference type="GeneCards" id="CLC"/>
<dbReference type="HGNC" id="HGNC:2014">
    <property type="gene designation" value="CLC"/>
</dbReference>
<dbReference type="HPA" id="ENSG00000105205">
    <property type="expression patterns" value="Tissue enriched (bone)"/>
</dbReference>
<dbReference type="MIM" id="153310">
    <property type="type" value="gene"/>
</dbReference>
<dbReference type="neXtProt" id="NX_Q05315"/>
<dbReference type="OpenTargets" id="ENSG00000105205"/>
<dbReference type="PharmGKB" id="PA26541"/>
<dbReference type="VEuPathDB" id="HostDB:ENSG00000105205"/>
<dbReference type="eggNOG" id="KOG3587">
    <property type="taxonomic scope" value="Eukaryota"/>
</dbReference>
<dbReference type="GeneTree" id="ENSGT00940000163192"/>
<dbReference type="HOGENOM" id="CLU_037794_4_0_1"/>
<dbReference type="InParanoid" id="Q05315"/>
<dbReference type="OMA" id="DKYQVMV"/>
<dbReference type="OrthoDB" id="5795596at2759"/>
<dbReference type="PAN-GO" id="Q05315">
    <property type="GO annotations" value="0 GO annotations based on evolutionary models"/>
</dbReference>
<dbReference type="PhylomeDB" id="Q05315"/>
<dbReference type="TreeFam" id="TF315551"/>
<dbReference type="BRENDA" id="3.1.1.5">
    <property type="organism ID" value="2681"/>
</dbReference>
<dbReference type="PathwayCommons" id="Q05315"/>
<dbReference type="BioGRID-ORCS" id="1178">
    <property type="hits" value="13 hits in 1150 CRISPR screens"/>
</dbReference>
<dbReference type="EvolutionaryTrace" id="Q05315"/>
<dbReference type="GeneWiki" id="CLC_(gene)"/>
<dbReference type="GenomeRNAi" id="1178"/>
<dbReference type="Pharos" id="Q05315">
    <property type="development level" value="Tbio"/>
</dbReference>
<dbReference type="PRO" id="PR:Q05315"/>
<dbReference type="Proteomes" id="UP000005640">
    <property type="component" value="Chromosome 19"/>
</dbReference>
<dbReference type="RNAct" id="Q05315">
    <property type="molecule type" value="protein"/>
</dbReference>
<dbReference type="Bgee" id="ENSG00000105205">
    <property type="expression patterns" value="Expressed in trabecular bone tissue and 115 other cell types or tissues"/>
</dbReference>
<dbReference type="GO" id="GO:0062023">
    <property type="term" value="C:collagen-containing extracellular matrix"/>
    <property type="evidence" value="ECO:0007005"/>
    <property type="project" value="BHF-UCL"/>
</dbReference>
<dbReference type="GO" id="GO:0005829">
    <property type="term" value="C:cytosol"/>
    <property type="evidence" value="ECO:0000314"/>
    <property type="project" value="UniProtKB"/>
</dbReference>
<dbReference type="GO" id="GO:0030246">
    <property type="term" value="F:carbohydrate binding"/>
    <property type="evidence" value="ECO:0000318"/>
    <property type="project" value="GO_Central"/>
</dbReference>
<dbReference type="GO" id="GO:0042802">
    <property type="term" value="F:identical protein binding"/>
    <property type="evidence" value="ECO:0000353"/>
    <property type="project" value="IntAct"/>
</dbReference>
<dbReference type="GO" id="GO:0046006">
    <property type="term" value="P:regulation of activated T cell proliferation"/>
    <property type="evidence" value="ECO:0000315"/>
    <property type="project" value="UniProtKB"/>
</dbReference>
<dbReference type="GO" id="GO:0002667">
    <property type="term" value="P:regulation of T cell anergy"/>
    <property type="evidence" value="ECO:0000315"/>
    <property type="project" value="UniProtKB"/>
</dbReference>
<dbReference type="GO" id="GO:0002724">
    <property type="term" value="P:regulation of T cell cytokine production"/>
    <property type="evidence" value="ECO:0000315"/>
    <property type="project" value="UniProtKB"/>
</dbReference>
<dbReference type="GO" id="GO:0070231">
    <property type="term" value="P:T cell apoptotic process"/>
    <property type="evidence" value="ECO:0000314"/>
    <property type="project" value="UniProtKB"/>
</dbReference>
<dbReference type="CDD" id="cd00070">
    <property type="entry name" value="GLECT"/>
    <property type="match status" value="1"/>
</dbReference>
<dbReference type="Gene3D" id="2.60.120.200">
    <property type="match status" value="1"/>
</dbReference>
<dbReference type="InterPro" id="IPR013320">
    <property type="entry name" value="ConA-like_dom_sf"/>
</dbReference>
<dbReference type="InterPro" id="IPR044156">
    <property type="entry name" value="Galectin-like"/>
</dbReference>
<dbReference type="InterPro" id="IPR001079">
    <property type="entry name" value="Galectin_CRD"/>
</dbReference>
<dbReference type="PANTHER" id="PTHR11346:SF120">
    <property type="entry name" value="GALACTOSIDE-BINDING SOLUBLE LECTIN 13-RELATED"/>
    <property type="match status" value="1"/>
</dbReference>
<dbReference type="PANTHER" id="PTHR11346">
    <property type="entry name" value="GALECTIN"/>
    <property type="match status" value="1"/>
</dbReference>
<dbReference type="Pfam" id="PF00337">
    <property type="entry name" value="Gal-bind_lectin"/>
    <property type="match status" value="1"/>
</dbReference>
<dbReference type="SMART" id="SM00908">
    <property type="entry name" value="Gal-bind_lectin"/>
    <property type="match status" value="1"/>
</dbReference>
<dbReference type="SMART" id="SM00276">
    <property type="entry name" value="GLECT"/>
    <property type="match status" value="1"/>
</dbReference>
<dbReference type="SUPFAM" id="SSF49899">
    <property type="entry name" value="Concanavalin A-like lectins/glucanases"/>
    <property type="match status" value="1"/>
</dbReference>
<dbReference type="PROSITE" id="PS51304">
    <property type="entry name" value="GALECTIN"/>
    <property type="match status" value="1"/>
</dbReference>
<evidence type="ECO:0000255" key="1">
    <source>
        <dbReference type="PROSITE-ProRule" id="PRU00639"/>
    </source>
</evidence>
<evidence type="ECO:0000269" key="2">
    <source>
    </source>
</evidence>
<evidence type="ECO:0000269" key="3">
    <source>
    </source>
</evidence>
<evidence type="ECO:0000269" key="4">
    <source>
    </source>
</evidence>
<evidence type="ECO:0000269" key="5">
    <source>
    </source>
</evidence>
<evidence type="ECO:0000269" key="6">
    <source>
    </source>
</evidence>
<evidence type="ECO:0000269" key="7">
    <source>
    </source>
</evidence>
<evidence type="ECO:0000269" key="8">
    <source>
    </source>
</evidence>
<evidence type="ECO:0000269" key="9">
    <source>
    </source>
</evidence>
<evidence type="ECO:0000269" key="10">
    <source>
    </source>
</evidence>
<evidence type="ECO:0000269" key="11">
    <source>
    </source>
</evidence>
<evidence type="ECO:0000269" key="12">
    <source>
    </source>
</evidence>
<evidence type="ECO:0000305" key="13"/>
<evidence type="ECO:0007829" key="14">
    <source>
        <dbReference type="PDB" id="6GKS"/>
    </source>
</evidence>
<comment type="function">
    <text evidence="7">Regulates immune responses through the recognition of cell-surface glycans. Essential for the anergy and suppressive function of CD25-positive regulatory T-cells (Treg).</text>
</comment>
<comment type="subunit">
    <text evidence="2">Interacts with CEL.</text>
</comment>
<comment type="interaction">
    <interactant intactId="EBI-10485101">
        <id>Q05315</id>
    </interactant>
    <interactant intactId="EBI-10485101">
        <id>Q05315</id>
        <label>CLC</label>
    </interactant>
    <organismsDiffer>false</organismsDiffer>
    <experiments>4</experiments>
</comment>
<comment type="subcellular location">
    <subcellularLocation>
        <location evidence="7">Cytoplasm</location>
        <location evidence="7">Cytosol</location>
    </subcellularLocation>
    <subcellularLocation>
        <location evidence="7">Cytoplasmic granule</location>
    </subcellularLocation>
    <text>Localized in granules from where it may be secreted or transported to other locations in the cell.</text>
</comment>
<comment type="tissue specificity">
    <text evidence="7 8 9 10">Expressed abundantly in the bone marrow. Expressed exclusively by eosinophils and basophils. Not detected in monocytes and neutrophils. Expressed in CD25-positive regulatory T-cells (Treg) (at protein level). Found in intestinal tissue from patients with Celiac disease, expression is directly related to the histological grade of mucosal damage and to the number of eosinophils found in the duodenal lesion (at protein level). Found in sputum of patients with eosinophilic inflammatory diseases such as asthma (at protein level).</text>
</comment>
<comment type="miscellaneous">
    <text>Forms hexagonal bipyramidal crystals, known as Charcot-Leyden crystals, in tissues and secretions from sites of eosinophil-associated inflammation and some myeloid leukemias.</text>
</comment>
<comment type="caution">
    <text evidence="13">Was originally thought to possess lysophospholipase activity but the absence of this activity has been shown by PubMed:11834744.</text>
</comment>
<comment type="online information" name="Functional Glycomics Gateway - Glycan Binding">
    <link uri="http://www.functionalglycomics.org/glycomics/GBPServlet?&amp;operationType=view&amp;cbpId=cbp_hum_Stlect_277"/>
    <text>Galectin-10</text>
</comment>